<accession>Q2A5E5</accession>
<name>RPOA1_FRATH</name>
<feature type="chain" id="PRO_0000296802" description="DNA-directed RNA polymerase subunit alpha 1">
    <location>
        <begin position="1"/>
        <end position="323"/>
    </location>
</feature>
<feature type="region of interest" description="Alpha N-terminal domain (alpha-NTD)" evidence="1">
    <location>
        <begin position="1"/>
        <end position="228"/>
    </location>
</feature>
<feature type="region of interest" description="Alpha C-terminal domain (alpha-CTD)" evidence="1">
    <location>
        <begin position="244"/>
        <end position="323"/>
    </location>
</feature>
<feature type="turn" evidence="2">
    <location>
        <begin position="21"/>
        <end position="23"/>
    </location>
</feature>
<feature type="strand" evidence="2">
    <location>
        <begin position="27"/>
        <end position="32"/>
    </location>
</feature>
<feature type="strand" evidence="2">
    <location>
        <begin position="34"/>
        <end position="36"/>
    </location>
</feature>
<feature type="helix" evidence="2">
    <location>
        <begin position="37"/>
        <end position="51"/>
    </location>
</feature>
<feature type="strand" evidence="2">
    <location>
        <begin position="54"/>
        <end position="62"/>
    </location>
</feature>
<feature type="strand" evidence="2">
    <location>
        <begin position="66"/>
        <end position="69"/>
    </location>
</feature>
<feature type="strand" evidence="2">
    <location>
        <begin position="75"/>
        <end position="78"/>
    </location>
</feature>
<feature type="helix" evidence="2">
    <location>
        <begin position="79"/>
        <end position="82"/>
    </location>
</feature>
<feature type="turn" evidence="2">
    <location>
        <begin position="83"/>
        <end position="87"/>
    </location>
</feature>
<feature type="strand" evidence="2">
    <location>
        <begin position="99"/>
        <end position="101"/>
    </location>
</feature>
<feature type="strand" evidence="2">
    <location>
        <begin position="104"/>
        <end position="106"/>
    </location>
</feature>
<feature type="strand" evidence="2">
    <location>
        <begin position="109"/>
        <end position="113"/>
    </location>
</feature>
<feature type="helix" evidence="2">
    <location>
        <begin position="114"/>
        <end position="116"/>
    </location>
</feature>
<feature type="strand" evidence="2">
    <location>
        <begin position="131"/>
        <end position="137"/>
    </location>
</feature>
<feature type="strand" evidence="2">
    <location>
        <begin position="141"/>
        <end position="143"/>
    </location>
</feature>
<feature type="strand" evidence="2">
    <location>
        <begin position="146"/>
        <end position="150"/>
    </location>
</feature>
<feature type="strand" evidence="2">
    <location>
        <begin position="155"/>
        <end position="157"/>
    </location>
</feature>
<feature type="strand" evidence="2">
    <location>
        <begin position="165"/>
        <end position="170"/>
    </location>
</feature>
<feature type="strand" evidence="2">
    <location>
        <begin position="178"/>
        <end position="187"/>
    </location>
</feature>
<feature type="strand" evidence="2">
    <location>
        <begin position="189"/>
        <end position="200"/>
    </location>
</feature>
<feature type="strand" evidence="2">
    <location>
        <begin position="202"/>
        <end position="204"/>
    </location>
</feature>
<feature type="helix" evidence="2">
    <location>
        <begin position="206"/>
        <end position="221"/>
    </location>
</feature>
<feature type="turn" evidence="2">
    <location>
        <begin position="222"/>
        <end position="226"/>
    </location>
</feature>
<gene>
    <name evidence="1" type="primary">rpoA1</name>
    <name type="ordered locus">FTL_0261</name>
</gene>
<organism>
    <name type="scientific">Francisella tularensis subsp. holarctica (strain LVS)</name>
    <dbReference type="NCBI Taxonomy" id="376619"/>
    <lineage>
        <taxon>Bacteria</taxon>
        <taxon>Pseudomonadati</taxon>
        <taxon>Pseudomonadota</taxon>
        <taxon>Gammaproteobacteria</taxon>
        <taxon>Thiotrichales</taxon>
        <taxon>Francisellaceae</taxon>
        <taxon>Francisella</taxon>
    </lineage>
</organism>
<comment type="function">
    <text evidence="1">DNA-dependent RNA polymerase catalyzes the transcription of DNA into RNA using the four ribonucleoside triphosphates as substrates.</text>
</comment>
<comment type="catalytic activity">
    <reaction evidence="1">
        <text>RNA(n) + a ribonucleoside 5'-triphosphate = RNA(n+1) + diphosphate</text>
        <dbReference type="Rhea" id="RHEA:21248"/>
        <dbReference type="Rhea" id="RHEA-COMP:14527"/>
        <dbReference type="Rhea" id="RHEA-COMP:17342"/>
        <dbReference type="ChEBI" id="CHEBI:33019"/>
        <dbReference type="ChEBI" id="CHEBI:61557"/>
        <dbReference type="ChEBI" id="CHEBI:140395"/>
        <dbReference type="EC" id="2.7.7.6"/>
    </reaction>
</comment>
<comment type="subunit">
    <text evidence="1">Homodimer. The RNAP catalytic core consists of 2 alpha, 1 beta, 1 beta' and 1 omega subunit. When a sigma factor is associated with the core the holoenzyme is formed, which can initiate transcription.</text>
</comment>
<comment type="domain">
    <text evidence="1">The N-terminal domain is essential for RNAP assembly and basal transcription, whereas the C-terminal domain is involved in interaction with transcriptional regulators and with upstream promoter elements.</text>
</comment>
<comment type="similarity">
    <text evidence="1">Belongs to the RNA polymerase alpha chain family.</text>
</comment>
<protein>
    <recommendedName>
        <fullName evidence="1">DNA-directed RNA polymerase subunit alpha 1</fullName>
        <shortName evidence="1">RNAP subunit alpha 1</shortName>
        <ecNumber evidence="1">2.7.7.6</ecNumber>
    </recommendedName>
    <alternativeName>
        <fullName evidence="1">RNA polymerase subunit alpha 1</fullName>
    </alternativeName>
    <alternativeName>
        <fullName evidence="1">Transcriptase subunit alpha 1</fullName>
    </alternativeName>
</protein>
<keyword id="KW-0002">3D-structure</keyword>
<keyword id="KW-0240">DNA-directed RNA polymerase</keyword>
<keyword id="KW-0548">Nucleotidyltransferase</keyword>
<keyword id="KW-1185">Reference proteome</keyword>
<keyword id="KW-0804">Transcription</keyword>
<keyword id="KW-0808">Transferase</keyword>
<sequence>MSNNNSKLEFVPNIQLKEDLGAFSYKVQLSPVEKGMAHILGNSIRRVLLSSLSGASIIKVNIANVLHEYSTLEDVKEDVVEIVSNLKKVAIKLDTGIDRLDLELSVNKSGVVSAGDFKTTQGVEIINKDQPIATLTNQRAFSLTATVSVGRNVGILSAIPTELERVGDIAVDADFNPIKRVAFEVFDNGDSETLEVFVKTNGTIEPLAAVTKALEYFCEQISVFVSLRVPSNGKTGDVLIDSNIDPILLKPIDDLELTVRSSNCLRAENIKYLGDLVQYSESQLMKIPNLGKKSLNEIKQILIDNNLSLGVQIDNFRELVEGK</sequence>
<evidence type="ECO:0000255" key="1">
    <source>
        <dbReference type="HAMAP-Rule" id="MF_00059"/>
    </source>
</evidence>
<evidence type="ECO:0007829" key="2">
    <source>
        <dbReference type="PDB" id="6WMP"/>
    </source>
</evidence>
<proteinExistence type="evidence at protein level"/>
<dbReference type="EC" id="2.7.7.6" evidence="1"/>
<dbReference type="EMBL" id="AM233362">
    <property type="protein sequence ID" value="CAJ78702.1"/>
    <property type="molecule type" value="Genomic_DNA"/>
</dbReference>
<dbReference type="RefSeq" id="WP_003021582.1">
    <property type="nucleotide sequence ID" value="NZ_CP009694.1"/>
</dbReference>
<dbReference type="PDB" id="6WMP">
    <property type="method" value="EM"/>
    <property type="resolution" value="2.98 A"/>
    <property type="chains" value="A=1-323"/>
</dbReference>
<dbReference type="PDB" id="6WMR">
    <property type="method" value="EM"/>
    <property type="resolution" value="3.46 A"/>
    <property type="chains" value="A=1-323"/>
</dbReference>
<dbReference type="PDB" id="6WMT">
    <property type="method" value="EM"/>
    <property type="resolution" value="4.43 A"/>
    <property type="chains" value="A=1-323"/>
</dbReference>
<dbReference type="PDBsum" id="6WMP"/>
<dbReference type="PDBsum" id="6WMR"/>
<dbReference type="PDBsum" id="6WMT"/>
<dbReference type="EMDB" id="EMD-21850"/>
<dbReference type="EMDB" id="EMD-21851"/>
<dbReference type="EMDB" id="EMD-21852"/>
<dbReference type="SMR" id="Q2A5E5"/>
<dbReference type="KEGG" id="ftl:FTL_0261"/>
<dbReference type="Proteomes" id="UP000001944">
    <property type="component" value="Chromosome"/>
</dbReference>
<dbReference type="GO" id="GO:0005737">
    <property type="term" value="C:cytoplasm"/>
    <property type="evidence" value="ECO:0007669"/>
    <property type="project" value="UniProtKB-ARBA"/>
</dbReference>
<dbReference type="GO" id="GO:0000428">
    <property type="term" value="C:DNA-directed RNA polymerase complex"/>
    <property type="evidence" value="ECO:0007669"/>
    <property type="project" value="UniProtKB-KW"/>
</dbReference>
<dbReference type="GO" id="GO:0003677">
    <property type="term" value="F:DNA binding"/>
    <property type="evidence" value="ECO:0007669"/>
    <property type="project" value="UniProtKB-UniRule"/>
</dbReference>
<dbReference type="GO" id="GO:0003899">
    <property type="term" value="F:DNA-directed RNA polymerase activity"/>
    <property type="evidence" value="ECO:0007669"/>
    <property type="project" value="UniProtKB-UniRule"/>
</dbReference>
<dbReference type="GO" id="GO:0046983">
    <property type="term" value="F:protein dimerization activity"/>
    <property type="evidence" value="ECO:0007669"/>
    <property type="project" value="InterPro"/>
</dbReference>
<dbReference type="GO" id="GO:0006351">
    <property type="term" value="P:DNA-templated transcription"/>
    <property type="evidence" value="ECO:0007669"/>
    <property type="project" value="UniProtKB-UniRule"/>
</dbReference>
<dbReference type="CDD" id="cd06928">
    <property type="entry name" value="RNAP_alpha_NTD"/>
    <property type="match status" value="1"/>
</dbReference>
<dbReference type="FunFam" id="1.10.150.20:FF:000001">
    <property type="entry name" value="DNA-directed RNA polymerase subunit alpha"/>
    <property type="match status" value="1"/>
</dbReference>
<dbReference type="Gene3D" id="1.10.150.20">
    <property type="entry name" value="5' to 3' exonuclease, C-terminal subdomain"/>
    <property type="match status" value="1"/>
</dbReference>
<dbReference type="Gene3D" id="2.170.120.12">
    <property type="entry name" value="DNA-directed RNA polymerase, insert domain"/>
    <property type="match status" value="1"/>
</dbReference>
<dbReference type="Gene3D" id="3.30.1360.10">
    <property type="entry name" value="RNA polymerase, RBP11-like subunit"/>
    <property type="match status" value="1"/>
</dbReference>
<dbReference type="HAMAP" id="MF_00059">
    <property type="entry name" value="RNApol_bact_RpoA"/>
    <property type="match status" value="1"/>
</dbReference>
<dbReference type="InterPro" id="IPR011262">
    <property type="entry name" value="DNA-dir_RNA_pol_insert"/>
</dbReference>
<dbReference type="InterPro" id="IPR011263">
    <property type="entry name" value="DNA-dir_RNA_pol_RpoA/D/Rpb3"/>
</dbReference>
<dbReference type="InterPro" id="IPR011773">
    <property type="entry name" value="DNA-dir_RpoA"/>
</dbReference>
<dbReference type="InterPro" id="IPR036603">
    <property type="entry name" value="RBP11-like"/>
</dbReference>
<dbReference type="InterPro" id="IPR011260">
    <property type="entry name" value="RNAP_asu_C"/>
</dbReference>
<dbReference type="InterPro" id="IPR036643">
    <property type="entry name" value="RNApol_insert_sf"/>
</dbReference>
<dbReference type="NCBIfam" id="NF003513">
    <property type="entry name" value="PRK05182.1-2"/>
    <property type="match status" value="1"/>
</dbReference>
<dbReference type="NCBIfam" id="TIGR02027">
    <property type="entry name" value="rpoA"/>
    <property type="match status" value="1"/>
</dbReference>
<dbReference type="Pfam" id="PF01000">
    <property type="entry name" value="RNA_pol_A_bac"/>
    <property type="match status" value="1"/>
</dbReference>
<dbReference type="Pfam" id="PF03118">
    <property type="entry name" value="RNA_pol_A_CTD"/>
    <property type="match status" value="1"/>
</dbReference>
<dbReference type="Pfam" id="PF01193">
    <property type="entry name" value="RNA_pol_L"/>
    <property type="match status" value="1"/>
</dbReference>
<dbReference type="SMART" id="SM00662">
    <property type="entry name" value="RPOLD"/>
    <property type="match status" value="1"/>
</dbReference>
<dbReference type="SUPFAM" id="SSF47789">
    <property type="entry name" value="C-terminal domain of RNA polymerase alpha subunit"/>
    <property type="match status" value="1"/>
</dbReference>
<dbReference type="SUPFAM" id="SSF56553">
    <property type="entry name" value="Insert subdomain of RNA polymerase alpha subunit"/>
    <property type="match status" value="1"/>
</dbReference>
<dbReference type="SUPFAM" id="SSF55257">
    <property type="entry name" value="RBP11-like subunits of RNA polymerase"/>
    <property type="match status" value="1"/>
</dbReference>
<reference key="1">
    <citation type="submission" date="2006-03" db="EMBL/GenBank/DDBJ databases">
        <title>Complete genome sequence of Francisella tularensis LVS (Live Vaccine Strain).</title>
        <authorList>
            <person name="Chain P."/>
            <person name="Larimer F."/>
            <person name="Land M."/>
            <person name="Stilwagen S."/>
            <person name="Larsson P."/>
            <person name="Bearden S."/>
            <person name="Chu M."/>
            <person name="Oyston P."/>
            <person name="Forsman M."/>
            <person name="Andersson S."/>
            <person name="Lindler L."/>
            <person name="Titball R."/>
            <person name="Garcia E."/>
        </authorList>
    </citation>
    <scope>NUCLEOTIDE SEQUENCE [LARGE SCALE GENOMIC DNA]</scope>
    <source>
        <strain>LVS</strain>
    </source>
</reference>